<comment type="function">
    <text>Required for conidiophore development.</text>
</comment>
<comment type="subcellular location">
    <subcellularLocation>
        <location>Cytoplasm</location>
    </subcellularLocation>
</comment>
<comment type="similarity">
    <text evidence="2">Belongs to the Mo25 family.</text>
</comment>
<comment type="sequence caution" evidence="2">
    <conflict type="erroneous gene model prediction">
        <sequence resource="EMBL-CDS" id="EAA63666"/>
    </conflict>
</comment>
<proteinExistence type="inferred from homology"/>
<feature type="chain" id="PRO_0000209835" description="Conidiophore development protein hymA">
    <location>
        <begin position="1"/>
        <end position="384"/>
    </location>
</feature>
<feature type="region of interest" description="Disordered" evidence="1">
    <location>
        <begin position="362"/>
        <end position="384"/>
    </location>
</feature>
<feature type="compositionally biased region" description="Basic and acidic residues" evidence="1">
    <location>
        <begin position="362"/>
        <end position="374"/>
    </location>
</feature>
<reference key="1">
    <citation type="journal article" date="1999" name="Mol. Gen. Genet.">
        <title>Molecular characterization of HymA, an evolutionarily highly conserved and highly expressed protein of Aspergillus nidulans.</title>
        <authorList>
            <person name="Karos M."/>
            <person name="Fischer R."/>
        </authorList>
    </citation>
    <scope>NUCLEOTIDE SEQUENCE [GENOMIC DNA]</scope>
</reference>
<reference key="2">
    <citation type="journal article" date="2005" name="Nature">
        <title>Sequencing of Aspergillus nidulans and comparative analysis with A. fumigatus and A. oryzae.</title>
        <authorList>
            <person name="Galagan J.E."/>
            <person name="Calvo S.E."/>
            <person name="Cuomo C."/>
            <person name="Ma L.-J."/>
            <person name="Wortman J.R."/>
            <person name="Batzoglou S."/>
            <person name="Lee S.-I."/>
            <person name="Bastuerkmen M."/>
            <person name="Spevak C.C."/>
            <person name="Clutterbuck J."/>
            <person name="Kapitonov V."/>
            <person name="Jurka J."/>
            <person name="Scazzocchio C."/>
            <person name="Farman M.L."/>
            <person name="Butler J."/>
            <person name="Purcell S."/>
            <person name="Harris S."/>
            <person name="Braus G.H."/>
            <person name="Draht O."/>
            <person name="Busch S."/>
            <person name="D'Enfert C."/>
            <person name="Bouchier C."/>
            <person name="Goldman G.H."/>
            <person name="Bell-Pedersen D."/>
            <person name="Griffiths-Jones S."/>
            <person name="Doonan J.H."/>
            <person name="Yu J."/>
            <person name="Vienken K."/>
            <person name="Pain A."/>
            <person name="Freitag M."/>
            <person name="Selker E.U."/>
            <person name="Archer D.B."/>
            <person name="Penalva M.A."/>
            <person name="Oakley B.R."/>
            <person name="Momany M."/>
            <person name="Tanaka T."/>
            <person name="Kumagai T."/>
            <person name="Asai K."/>
            <person name="Machida M."/>
            <person name="Nierman W.C."/>
            <person name="Denning D.W."/>
            <person name="Caddick M.X."/>
            <person name="Hynes M."/>
            <person name="Paoletti M."/>
            <person name="Fischer R."/>
            <person name="Miller B.L."/>
            <person name="Dyer P.S."/>
            <person name="Sachs M.S."/>
            <person name="Osmani S.A."/>
            <person name="Birren B.W."/>
        </authorList>
    </citation>
    <scope>NUCLEOTIDE SEQUENCE [LARGE SCALE GENOMIC DNA]</scope>
    <source>
        <strain>FGSC A4 / ATCC 38163 / CBS 112.46 / NRRL 194 / M139</strain>
    </source>
</reference>
<reference key="3">
    <citation type="journal article" date="2009" name="Fungal Genet. Biol.">
        <title>The 2008 update of the Aspergillus nidulans genome annotation: a community effort.</title>
        <authorList>
            <person name="Wortman J.R."/>
            <person name="Gilsenan J.M."/>
            <person name="Joardar V."/>
            <person name="Deegan J."/>
            <person name="Clutterbuck J."/>
            <person name="Andersen M.R."/>
            <person name="Archer D."/>
            <person name="Bencina M."/>
            <person name="Braus G."/>
            <person name="Coutinho P."/>
            <person name="von Dohren H."/>
            <person name="Doonan J."/>
            <person name="Driessen A.J."/>
            <person name="Durek P."/>
            <person name="Espeso E."/>
            <person name="Fekete E."/>
            <person name="Flipphi M."/>
            <person name="Estrada C.G."/>
            <person name="Geysens S."/>
            <person name="Goldman G."/>
            <person name="de Groot P.W."/>
            <person name="Hansen K."/>
            <person name="Harris S.D."/>
            <person name="Heinekamp T."/>
            <person name="Helmstaedt K."/>
            <person name="Henrissat B."/>
            <person name="Hofmann G."/>
            <person name="Homan T."/>
            <person name="Horio T."/>
            <person name="Horiuchi H."/>
            <person name="James S."/>
            <person name="Jones M."/>
            <person name="Karaffa L."/>
            <person name="Karanyi Z."/>
            <person name="Kato M."/>
            <person name="Keller N."/>
            <person name="Kelly D.E."/>
            <person name="Kiel J.A."/>
            <person name="Kim J.M."/>
            <person name="van der Klei I.J."/>
            <person name="Klis F.M."/>
            <person name="Kovalchuk A."/>
            <person name="Krasevec N."/>
            <person name="Kubicek C.P."/>
            <person name="Liu B."/>
            <person name="Maccabe A."/>
            <person name="Meyer V."/>
            <person name="Mirabito P."/>
            <person name="Miskei M."/>
            <person name="Mos M."/>
            <person name="Mullins J."/>
            <person name="Nelson D.R."/>
            <person name="Nielsen J."/>
            <person name="Oakley B.R."/>
            <person name="Osmani S.A."/>
            <person name="Pakula T."/>
            <person name="Paszewski A."/>
            <person name="Paulsen I."/>
            <person name="Pilsyk S."/>
            <person name="Pocsi I."/>
            <person name="Punt P.J."/>
            <person name="Ram A.F."/>
            <person name="Ren Q."/>
            <person name="Robellet X."/>
            <person name="Robson G."/>
            <person name="Seiboth B."/>
            <person name="van Solingen P."/>
            <person name="Specht T."/>
            <person name="Sun J."/>
            <person name="Taheri-Talesh N."/>
            <person name="Takeshita N."/>
            <person name="Ussery D."/>
            <person name="vanKuyk P.A."/>
            <person name="Visser H."/>
            <person name="van de Vondervoort P.J."/>
            <person name="de Vries R.P."/>
            <person name="Walton J."/>
            <person name="Xiang X."/>
            <person name="Xiong Y."/>
            <person name="Zeng A.P."/>
            <person name="Brandt B.W."/>
            <person name="Cornell M.J."/>
            <person name="van den Hondel C.A."/>
            <person name="Visser J."/>
            <person name="Oliver S.G."/>
            <person name="Turner G."/>
        </authorList>
    </citation>
    <scope>GENOME REANNOTATION</scope>
    <source>
        <strain>FGSC A4 / ATCC 38163 / CBS 112.46 / NRRL 194 / M139</strain>
    </source>
</reference>
<gene>
    <name type="primary">hymA</name>
    <name type="ORF">AN3095</name>
</gene>
<evidence type="ECO:0000256" key="1">
    <source>
        <dbReference type="SAM" id="MobiDB-lite"/>
    </source>
</evidence>
<evidence type="ECO:0000305" key="2"/>
<organism>
    <name type="scientific">Emericella nidulans (strain FGSC A4 / ATCC 38163 / CBS 112.46 / NRRL 194 / M139)</name>
    <name type="common">Aspergillus nidulans</name>
    <dbReference type="NCBI Taxonomy" id="227321"/>
    <lineage>
        <taxon>Eukaryota</taxon>
        <taxon>Fungi</taxon>
        <taxon>Dikarya</taxon>
        <taxon>Ascomycota</taxon>
        <taxon>Pezizomycotina</taxon>
        <taxon>Eurotiomycetes</taxon>
        <taxon>Eurotiomycetidae</taxon>
        <taxon>Eurotiales</taxon>
        <taxon>Aspergillaceae</taxon>
        <taxon>Aspergillus</taxon>
        <taxon>Aspergillus subgen. Nidulantes</taxon>
    </lineage>
</organism>
<accession>O60032</accession>
<accession>C8VIM7</accession>
<accession>Q5B8N5</accession>
<name>HYMA_EMENI</name>
<keyword id="KW-0963">Cytoplasm</keyword>
<keyword id="KW-1185">Reference proteome</keyword>
<dbReference type="EMBL" id="AJ001157">
    <property type="protein sequence ID" value="CAA04556.1"/>
    <property type="molecule type" value="Genomic_DNA"/>
</dbReference>
<dbReference type="EMBL" id="AACD01000051">
    <property type="protein sequence ID" value="EAA63666.1"/>
    <property type="status" value="ALT_SEQ"/>
    <property type="molecule type" value="Genomic_DNA"/>
</dbReference>
<dbReference type="EMBL" id="BN001306">
    <property type="protein sequence ID" value="CBF83417.1"/>
    <property type="molecule type" value="Genomic_DNA"/>
</dbReference>
<dbReference type="RefSeq" id="XP_050468461.1">
    <property type="nucleotide sequence ID" value="XM_050612551.1"/>
</dbReference>
<dbReference type="RefSeq" id="XP_660699.1">
    <property type="nucleotide sequence ID" value="XM_655607.1"/>
</dbReference>
<dbReference type="SMR" id="O60032"/>
<dbReference type="FunCoup" id="O60032">
    <property type="interactions" value="375"/>
</dbReference>
<dbReference type="STRING" id="227321.O60032"/>
<dbReference type="EnsemblFungi" id="CBF83417">
    <property type="protein sequence ID" value="CBF83417"/>
    <property type="gene ID" value="ANIA_03095"/>
</dbReference>
<dbReference type="GeneID" id="2874076"/>
<dbReference type="VEuPathDB" id="FungiDB:AN3095"/>
<dbReference type="eggNOG" id="KOG1566">
    <property type="taxonomic scope" value="Eukaryota"/>
</dbReference>
<dbReference type="HOGENOM" id="CLU_035755_0_0_1"/>
<dbReference type="InParanoid" id="O60032"/>
<dbReference type="OMA" id="AYDHKES"/>
<dbReference type="OrthoDB" id="609103at2759"/>
<dbReference type="Proteomes" id="UP000000560">
    <property type="component" value="Chromosome VI"/>
</dbReference>
<dbReference type="GO" id="GO:0032153">
    <property type="term" value="C:cell division site"/>
    <property type="evidence" value="ECO:0007669"/>
    <property type="project" value="EnsemblFungi"/>
</dbReference>
<dbReference type="GO" id="GO:0005933">
    <property type="term" value="C:cellular bud"/>
    <property type="evidence" value="ECO:0007669"/>
    <property type="project" value="EnsemblFungi"/>
</dbReference>
<dbReference type="GO" id="GO:0005737">
    <property type="term" value="C:cytoplasm"/>
    <property type="evidence" value="ECO:0000314"/>
    <property type="project" value="AspGD"/>
</dbReference>
<dbReference type="GO" id="GO:0000131">
    <property type="term" value="C:incipient cellular bud site"/>
    <property type="evidence" value="ECO:0007669"/>
    <property type="project" value="EnsemblFungi"/>
</dbReference>
<dbReference type="GO" id="GO:0043332">
    <property type="term" value="C:mating projection tip"/>
    <property type="evidence" value="ECO:0007669"/>
    <property type="project" value="EnsemblFungi"/>
</dbReference>
<dbReference type="GO" id="GO:0071958">
    <property type="term" value="C:new mitotic spindle pole body"/>
    <property type="evidence" value="ECO:0007669"/>
    <property type="project" value="EnsemblFungi"/>
</dbReference>
<dbReference type="GO" id="GO:0035839">
    <property type="term" value="C:non-growing cell tip"/>
    <property type="evidence" value="ECO:0007669"/>
    <property type="project" value="EnsemblFungi"/>
</dbReference>
<dbReference type="GO" id="GO:0005634">
    <property type="term" value="C:nucleus"/>
    <property type="evidence" value="ECO:0007669"/>
    <property type="project" value="EnsemblFungi"/>
</dbReference>
<dbReference type="GO" id="GO:0043539">
    <property type="term" value="F:protein serine/threonine kinase activator activity"/>
    <property type="evidence" value="ECO:0000318"/>
    <property type="project" value="GO_Central"/>
</dbReference>
<dbReference type="GO" id="GO:0007118">
    <property type="term" value="P:budding cell apical bud growth"/>
    <property type="evidence" value="ECO:0007669"/>
    <property type="project" value="EnsemblFungi"/>
</dbReference>
<dbReference type="GO" id="GO:0048315">
    <property type="term" value="P:conidium formation"/>
    <property type="evidence" value="ECO:0000315"/>
    <property type="project" value="AspGD"/>
</dbReference>
<dbReference type="GO" id="GO:0030448">
    <property type="term" value="P:hyphal growth"/>
    <property type="evidence" value="ECO:0000315"/>
    <property type="project" value="AspGD"/>
</dbReference>
<dbReference type="GO" id="GO:0035556">
    <property type="term" value="P:intracellular signal transduction"/>
    <property type="evidence" value="ECO:0000318"/>
    <property type="project" value="GO_Central"/>
</dbReference>
<dbReference type="GO" id="GO:0071574">
    <property type="term" value="P:protein localization to medial cortex"/>
    <property type="evidence" value="ECO:0007669"/>
    <property type="project" value="EnsemblFungi"/>
</dbReference>
<dbReference type="GO" id="GO:0006355">
    <property type="term" value="P:regulation of DNA-templated transcription"/>
    <property type="evidence" value="ECO:0007669"/>
    <property type="project" value="EnsemblFungi"/>
</dbReference>
<dbReference type="GO" id="GO:2000100">
    <property type="term" value="P:regulation of establishment or maintenance of bipolar cell polarity regulating cell shape"/>
    <property type="evidence" value="ECO:0007669"/>
    <property type="project" value="EnsemblFungi"/>
</dbReference>
<dbReference type="GO" id="GO:0070507">
    <property type="term" value="P:regulation of microtubule cytoskeleton organization"/>
    <property type="evidence" value="ECO:0007669"/>
    <property type="project" value="EnsemblFungi"/>
</dbReference>
<dbReference type="GO" id="GO:0000920">
    <property type="term" value="P:septum digestion after cytokinesis"/>
    <property type="evidence" value="ECO:0007669"/>
    <property type="project" value="EnsemblFungi"/>
</dbReference>
<dbReference type="FunFam" id="1.25.10.10:FF:000257">
    <property type="entry name" value="Conidiophore development protein hymA"/>
    <property type="match status" value="1"/>
</dbReference>
<dbReference type="Gene3D" id="1.25.10.10">
    <property type="entry name" value="Leucine-rich Repeat Variant"/>
    <property type="match status" value="1"/>
</dbReference>
<dbReference type="InterPro" id="IPR011989">
    <property type="entry name" value="ARM-like"/>
</dbReference>
<dbReference type="InterPro" id="IPR016024">
    <property type="entry name" value="ARM-type_fold"/>
</dbReference>
<dbReference type="InterPro" id="IPR013878">
    <property type="entry name" value="Mo25"/>
</dbReference>
<dbReference type="PANTHER" id="PTHR10182">
    <property type="entry name" value="CALCIUM-BINDING PROTEIN 39-RELATED"/>
    <property type="match status" value="1"/>
</dbReference>
<dbReference type="PANTHER" id="PTHR10182:SF3">
    <property type="entry name" value="PROTEIN MO25"/>
    <property type="match status" value="1"/>
</dbReference>
<dbReference type="Pfam" id="PF08569">
    <property type="entry name" value="Mo25"/>
    <property type="match status" value="1"/>
</dbReference>
<dbReference type="SUPFAM" id="SSF48371">
    <property type="entry name" value="ARM repeat"/>
    <property type="match status" value="1"/>
</dbReference>
<sequence length="384" mass="44393">MAFFFNRGRSRQPSDVVRSIKDLLLRLREPSTASKVEDELAKQLSQMKLMVQGTQELEASTDQVHALVQAMLHEDLLYELAVALHNLPFEARKDTQTIFSHILRFKPPHGNSPDPPVISYIVHNRPEIIIELCRGYEHSQSAMPCGTILREALKFDVIAAIILYDQSKEGEPAIRLTEVQPNVPQRGTGVFWRFFHWIDRGTFELSADAFTTFREILTRHKSLVTGYLATNFDYFFAQFNTFLVQSESYVTKRQSIKLLGEILLDRANYSVMMRYVESGENLKLCMKLLRDDRKMVQYEGFHVFKVFVANPDKSVAVQRILINNRDRLLRFLPKFLEDRTDDDQFTDEKSFLVRQIELLPKEPIEPSRSAREPSRSTANTTTVA</sequence>
<protein>
    <recommendedName>
        <fullName>Conidiophore development protein hymA</fullName>
    </recommendedName>
</protein>